<comment type="function">
    <text evidence="1">Catalyzes the addition of meso-diaminopimelic acid to the nucleotide precursor UDP-N-acetylmuramoyl-L-alanyl-D-glutamate (UMAG) in the biosynthesis of bacterial cell-wall peptidoglycan.</text>
</comment>
<comment type="catalytic activity">
    <reaction evidence="1">
        <text>UDP-N-acetyl-alpha-D-muramoyl-L-alanyl-D-glutamate + meso-2,6-diaminopimelate + ATP = UDP-N-acetyl-alpha-D-muramoyl-L-alanyl-gamma-D-glutamyl-meso-2,6-diaminopimelate + ADP + phosphate + H(+)</text>
        <dbReference type="Rhea" id="RHEA:23676"/>
        <dbReference type="ChEBI" id="CHEBI:15378"/>
        <dbReference type="ChEBI" id="CHEBI:30616"/>
        <dbReference type="ChEBI" id="CHEBI:43474"/>
        <dbReference type="ChEBI" id="CHEBI:57791"/>
        <dbReference type="ChEBI" id="CHEBI:83900"/>
        <dbReference type="ChEBI" id="CHEBI:83905"/>
        <dbReference type="ChEBI" id="CHEBI:456216"/>
        <dbReference type="EC" id="6.3.2.13"/>
    </reaction>
</comment>
<comment type="cofactor">
    <cofactor evidence="1">
        <name>Mg(2+)</name>
        <dbReference type="ChEBI" id="CHEBI:18420"/>
    </cofactor>
</comment>
<comment type="pathway">
    <text evidence="1">Cell wall biogenesis; peptidoglycan biosynthesis.</text>
</comment>
<comment type="subcellular location">
    <subcellularLocation>
        <location evidence="1">Cytoplasm</location>
    </subcellularLocation>
</comment>
<comment type="PTM">
    <text evidence="1">Carboxylation is probably crucial for Mg(2+) binding and, consequently, for the gamma-phosphate positioning of ATP.</text>
</comment>
<comment type="similarity">
    <text evidence="1">Belongs to the MurCDEF family. MurE subfamily.</text>
</comment>
<accession>A7Z4E1</accession>
<organism>
    <name type="scientific">Bacillus velezensis (strain DSM 23117 / BGSC 10A6 / LMG 26770 / FZB42)</name>
    <name type="common">Bacillus amyloliquefaciens subsp. plantarum</name>
    <dbReference type="NCBI Taxonomy" id="326423"/>
    <lineage>
        <taxon>Bacteria</taxon>
        <taxon>Bacillati</taxon>
        <taxon>Bacillota</taxon>
        <taxon>Bacilli</taxon>
        <taxon>Bacillales</taxon>
        <taxon>Bacillaceae</taxon>
        <taxon>Bacillus</taxon>
        <taxon>Bacillus amyloliquefaciens group</taxon>
    </lineage>
</organism>
<evidence type="ECO:0000255" key="1">
    <source>
        <dbReference type="HAMAP-Rule" id="MF_00208"/>
    </source>
</evidence>
<keyword id="KW-0067">ATP-binding</keyword>
<keyword id="KW-0131">Cell cycle</keyword>
<keyword id="KW-0132">Cell division</keyword>
<keyword id="KW-0133">Cell shape</keyword>
<keyword id="KW-0961">Cell wall biogenesis/degradation</keyword>
<keyword id="KW-0963">Cytoplasm</keyword>
<keyword id="KW-0436">Ligase</keyword>
<keyword id="KW-0460">Magnesium</keyword>
<keyword id="KW-0547">Nucleotide-binding</keyword>
<keyword id="KW-0573">Peptidoglycan synthesis</keyword>
<proteinExistence type="inferred from homology"/>
<reference key="1">
    <citation type="journal article" date="2007" name="Nat. Biotechnol.">
        <title>Comparative analysis of the complete genome sequence of the plant growth-promoting bacterium Bacillus amyloliquefaciens FZB42.</title>
        <authorList>
            <person name="Chen X.H."/>
            <person name="Koumoutsi A."/>
            <person name="Scholz R."/>
            <person name="Eisenreich A."/>
            <person name="Schneider K."/>
            <person name="Heinemeyer I."/>
            <person name="Morgenstern B."/>
            <person name="Voss B."/>
            <person name="Hess W.R."/>
            <person name="Reva O."/>
            <person name="Junge H."/>
            <person name="Voigt B."/>
            <person name="Jungblut P.R."/>
            <person name="Vater J."/>
            <person name="Suessmuth R."/>
            <person name="Liesegang H."/>
            <person name="Strittmatter A."/>
            <person name="Gottschalk G."/>
            <person name="Borriss R."/>
        </authorList>
    </citation>
    <scope>NUCLEOTIDE SEQUENCE [LARGE SCALE GENOMIC DNA]</scope>
    <source>
        <strain>DSM 23117 / BGSC 10A6 / LMG 26770 / FZB42</strain>
    </source>
</reference>
<name>MURE_BACVZ</name>
<dbReference type="EC" id="6.3.2.13" evidence="1"/>
<dbReference type="EMBL" id="CP000560">
    <property type="protein sequence ID" value="ABS73867.1"/>
    <property type="molecule type" value="Genomic_DNA"/>
</dbReference>
<dbReference type="RefSeq" id="WP_012117503.1">
    <property type="nucleotide sequence ID" value="NC_009725.2"/>
</dbReference>
<dbReference type="SMR" id="A7Z4E1"/>
<dbReference type="GeneID" id="93080637"/>
<dbReference type="KEGG" id="bay:RBAM_015040"/>
<dbReference type="HOGENOM" id="CLU_022291_4_1_9"/>
<dbReference type="UniPathway" id="UPA00219"/>
<dbReference type="Proteomes" id="UP000001120">
    <property type="component" value="Chromosome"/>
</dbReference>
<dbReference type="GO" id="GO:0005737">
    <property type="term" value="C:cytoplasm"/>
    <property type="evidence" value="ECO:0007669"/>
    <property type="project" value="UniProtKB-SubCell"/>
</dbReference>
<dbReference type="GO" id="GO:0005524">
    <property type="term" value="F:ATP binding"/>
    <property type="evidence" value="ECO:0007669"/>
    <property type="project" value="UniProtKB-UniRule"/>
</dbReference>
<dbReference type="GO" id="GO:0000287">
    <property type="term" value="F:magnesium ion binding"/>
    <property type="evidence" value="ECO:0007669"/>
    <property type="project" value="UniProtKB-UniRule"/>
</dbReference>
<dbReference type="GO" id="GO:0008765">
    <property type="term" value="F:UDP-N-acetylmuramoylalanyl-D-glutamate-2,6-diaminopimelate ligase activity"/>
    <property type="evidence" value="ECO:0007669"/>
    <property type="project" value="UniProtKB-UniRule"/>
</dbReference>
<dbReference type="GO" id="GO:0051301">
    <property type="term" value="P:cell division"/>
    <property type="evidence" value="ECO:0007669"/>
    <property type="project" value="UniProtKB-KW"/>
</dbReference>
<dbReference type="GO" id="GO:0071555">
    <property type="term" value="P:cell wall organization"/>
    <property type="evidence" value="ECO:0007669"/>
    <property type="project" value="UniProtKB-KW"/>
</dbReference>
<dbReference type="GO" id="GO:0009252">
    <property type="term" value="P:peptidoglycan biosynthetic process"/>
    <property type="evidence" value="ECO:0007669"/>
    <property type="project" value="UniProtKB-UniRule"/>
</dbReference>
<dbReference type="GO" id="GO:0008360">
    <property type="term" value="P:regulation of cell shape"/>
    <property type="evidence" value="ECO:0007669"/>
    <property type="project" value="UniProtKB-KW"/>
</dbReference>
<dbReference type="FunFam" id="3.40.1390.10:FF:000005">
    <property type="entry name" value="UDP-N-acetylmuramoyl-L-alanyl-D-glutamate--2,6-diaminopimelate ligase"/>
    <property type="match status" value="1"/>
</dbReference>
<dbReference type="FunFam" id="3.90.190.20:FF:000006">
    <property type="entry name" value="UDP-N-acetylmuramoyl-L-alanyl-D-glutamate--2,6-diaminopimelate ligase"/>
    <property type="match status" value="1"/>
</dbReference>
<dbReference type="Gene3D" id="3.90.190.20">
    <property type="entry name" value="Mur ligase, C-terminal domain"/>
    <property type="match status" value="1"/>
</dbReference>
<dbReference type="Gene3D" id="3.40.1190.10">
    <property type="entry name" value="Mur-like, catalytic domain"/>
    <property type="match status" value="1"/>
</dbReference>
<dbReference type="Gene3D" id="3.40.1390.10">
    <property type="entry name" value="MurE/MurF, N-terminal domain"/>
    <property type="match status" value="1"/>
</dbReference>
<dbReference type="HAMAP" id="MF_00208">
    <property type="entry name" value="MurE"/>
    <property type="match status" value="1"/>
</dbReference>
<dbReference type="InterPro" id="IPR036565">
    <property type="entry name" value="Mur-like_cat_sf"/>
</dbReference>
<dbReference type="InterPro" id="IPR004101">
    <property type="entry name" value="Mur_ligase_C"/>
</dbReference>
<dbReference type="InterPro" id="IPR036615">
    <property type="entry name" value="Mur_ligase_C_dom_sf"/>
</dbReference>
<dbReference type="InterPro" id="IPR013221">
    <property type="entry name" value="Mur_ligase_cen"/>
</dbReference>
<dbReference type="InterPro" id="IPR000713">
    <property type="entry name" value="Mur_ligase_N"/>
</dbReference>
<dbReference type="InterPro" id="IPR035911">
    <property type="entry name" value="MurE/MurF_N"/>
</dbReference>
<dbReference type="InterPro" id="IPR005761">
    <property type="entry name" value="UDP-N-AcMur-Glu-dNH2Pim_ligase"/>
</dbReference>
<dbReference type="NCBIfam" id="TIGR01085">
    <property type="entry name" value="murE"/>
    <property type="match status" value="1"/>
</dbReference>
<dbReference type="NCBIfam" id="NF001124">
    <property type="entry name" value="PRK00139.1-2"/>
    <property type="match status" value="1"/>
</dbReference>
<dbReference type="NCBIfam" id="NF001126">
    <property type="entry name" value="PRK00139.1-4"/>
    <property type="match status" value="1"/>
</dbReference>
<dbReference type="PANTHER" id="PTHR23135">
    <property type="entry name" value="MUR LIGASE FAMILY MEMBER"/>
    <property type="match status" value="1"/>
</dbReference>
<dbReference type="PANTHER" id="PTHR23135:SF4">
    <property type="entry name" value="UDP-N-ACETYLMURAMOYL-L-ALANYL-D-GLUTAMATE--2,6-DIAMINOPIMELATE LIGASE MURE HOMOLOG, CHLOROPLASTIC"/>
    <property type="match status" value="1"/>
</dbReference>
<dbReference type="Pfam" id="PF01225">
    <property type="entry name" value="Mur_ligase"/>
    <property type="match status" value="1"/>
</dbReference>
<dbReference type="Pfam" id="PF02875">
    <property type="entry name" value="Mur_ligase_C"/>
    <property type="match status" value="1"/>
</dbReference>
<dbReference type="Pfam" id="PF08245">
    <property type="entry name" value="Mur_ligase_M"/>
    <property type="match status" value="1"/>
</dbReference>
<dbReference type="SUPFAM" id="SSF53623">
    <property type="entry name" value="MurD-like peptide ligases, catalytic domain"/>
    <property type="match status" value="1"/>
</dbReference>
<dbReference type="SUPFAM" id="SSF53244">
    <property type="entry name" value="MurD-like peptide ligases, peptide-binding domain"/>
    <property type="match status" value="1"/>
</dbReference>
<dbReference type="SUPFAM" id="SSF63418">
    <property type="entry name" value="MurE/MurF N-terminal domain"/>
    <property type="match status" value="1"/>
</dbReference>
<gene>
    <name evidence="1" type="primary">murE</name>
    <name type="ordered locus">RBAM_015040</name>
</gene>
<protein>
    <recommendedName>
        <fullName evidence="1">UDP-N-acetylmuramoyl-L-alanyl-D-glutamate--2,6-diaminopimelate ligase</fullName>
        <ecNumber evidence="1">6.3.2.13</ecNumber>
    </recommendedName>
    <alternativeName>
        <fullName evidence="1">Meso-A2pm-adding enzyme</fullName>
    </alternativeName>
    <alternativeName>
        <fullName evidence="1">Meso-diaminopimelate-adding enzyme</fullName>
    </alternativeName>
    <alternativeName>
        <fullName evidence="1">UDP-MurNAc-L-Ala-D-Glu:meso-diaminopimelate ligase</fullName>
    </alternativeName>
    <alternativeName>
        <fullName evidence="1">UDP-MurNAc-tripeptide synthetase</fullName>
    </alternativeName>
    <alternativeName>
        <fullName evidence="1">UDP-N-acetylmuramyl-tripeptide synthetase</fullName>
    </alternativeName>
</protein>
<feature type="chain" id="PRO_1000012336" description="UDP-N-acetylmuramoyl-L-alanyl-D-glutamate--2,6-diaminopimelate ligase">
    <location>
        <begin position="1"/>
        <end position="490"/>
    </location>
</feature>
<feature type="short sequence motif" description="Meso-diaminopimelate recognition motif">
    <location>
        <begin position="408"/>
        <end position="411"/>
    </location>
</feature>
<feature type="binding site" evidence="1">
    <location>
        <position position="31"/>
    </location>
    <ligand>
        <name>UDP-N-acetyl-alpha-D-muramoyl-L-alanyl-D-glutamate</name>
        <dbReference type="ChEBI" id="CHEBI:83900"/>
    </ligand>
</feature>
<feature type="binding site" evidence="1">
    <location>
        <begin position="109"/>
        <end position="115"/>
    </location>
    <ligand>
        <name>ATP</name>
        <dbReference type="ChEBI" id="CHEBI:30616"/>
    </ligand>
</feature>
<feature type="binding site" evidence="1">
    <location>
        <position position="150"/>
    </location>
    <ligand>
        <name>UDP-N-acetyl-alpha-D-muramoyl-L-alanyl-D-glutamate</name>
        <dbReference type="ChEBI" id="CHEBI:83900"/>
    </ligand>
</feature>
<feature type="binding site" evidence="1">
    <location>
        <begin position="151"/>
        <end position="152"/>
    </location>
    <ligand>
        <name>UDP-N-acetyl-alpha-D-muramoyl-L-alanyl-D-glutamate</name>
        <dbReference type="ChEBI" id="CHEBI:83900"/>
    </ligand>
</feature>
<feature type="binding site" evidence="1">
    <location>
        <position position="178"/>
    </location>
    <ligand>
        <name>UDP-N-acetyl-alpha-D-muramoyl-L-alanyl-D-glutamate</name>
        <dbReference type="ChEBI" id="CHEBI:83900"/>
    </ligand>
</feature>
<feature type="binding site" evidence="1">
    <location>
        <position position="186"/>
    </location>
    <ligand>
        <name>UDP-N-acetyl-alpha-D-muramoyl-L-alanyl-D-glutamate</name>
        <dbReference type="ChEBI" id="CHEBI:83900"/>
    </ligand>
</feature>
<feature type="binding site" evidence="1">
    <location>
        <position position="384"/>
    </location>
    <ligand>
        <name>meso-2,6-diaminopimelate</name>
        <dbReference type="ChEBI" id="CHEBI:57791"/>
    </ligand>
</feature>
<feature type="binding site" evidence="1">
    <location>
        <begin position="408"/>
        <end position="411"/>
    </location>
    <ligand>
        <name>meso-2,6-diaminopimelate</name>
        <dbReference type="ChEBI" id="CHEBI:57791"/>
    </ligand>
</feature>
<feature type="binding site" evidence="1">
    <location>
        <position position="458"/>
    </location>
    <ligand>
        <name>meso-2,6-diaminopimelate</name>
        <dbReference type="ChEBI" id="CHEBI:57791"/>
    </ligand>
</feature>
<feature type="binding site" evidence="1">
    <location>
        <position position="462"/>
    </location>
    <ligand>
        <name>meso-2,6-diaminopimelate</name>
        <dbReference type="ChEBI" id="CHEBI:57791"/>
    </ligand>
</feature>
<feature type="modified residue" description="N6-carboxylysine" evidence="1">
    <location>
        <position position="218"/>
    </location>
</feature>
<sequence>MKLTKLLTYLMAEPVQNDFHDPDITSIEMDSREVRKGSLFVCIKGYTVDGHDFAQKAAENGAAAIVAEKELDVDVPVIIVRRSQRALSVLSDAFYGQPTKQLQLIGITGTNGKTSTTHMVDEIFKKAGRQTGLIGTMYIKIGDETFPVKNTTPESVTLQKTFKKMNDEHVDTAIMEVSSHALSLGRVHGCDYDIAVFTNLTQDHLDYHKTMEDYRQAKSLLFSQLGGSFNHEKPKRAVLNADDKASAYFEKVTAAHILTYGIENDADVMAKQIEISAQGTSFELVTPKGTKQITVSLVGRFNVYNVLAAAATGIAAGLPFDTITSALEELQGVRGRFELVNHNQPFPVVVDYAHTPDSLENVLNTCKDMTEGKLFVVVGCGGDRDKTKRPKMAEIAVRIADEPIFTSDNPRSEDPLAILRDMERGVEGTYYHSIANREQAIFFAIANAKKGDVVLIAGKGHETYQQIGNETFDFDDAEVAGRAIVELNKK</sequence>